<name>PAND_XANOM</name>
<accession>Q2P379</accession>
<dbReference type="EC" id="4.1.1.11" evidence="1"/>
<dbReference type="EMBL" id="AP008229">
    <property type="protein sequence ID" value="BAE68998.1"/>
    <property type="molecule type" value="Genomic_DNA"/>
</dbReference>
<dbReference type="RefSeq" id="WP_011259030.1">
    <property type="nucleotide sequence ID" value="NC_007705.1"/>
</dbReference>
<dbReference type="SMR" id="Q2P379"/>
<dbReference type="KEGG" id="xom:XOO2243"/>
<dbReference type="HOGENOM" id="CLU_115305_2_1_6"/>
<dbReference type="UniPathway" id="UPA00028">
    <property type="reaction ID" value="UER00002"/>
</dbReference>
<dbReference type="GO" id="GO:0005829">
    <property type="term" value="C:cytosol"/>
    <property type="evidence" value="ECO:0007669"/>
    <property type="project" value="TreeGrafter"/>
</dbReference>
<dbReference type="GO" id="GO:0004068">
    <property type="term" value="F:aspartate 1-decarboxylase activity"/>
    <property type="evidence" value="ECO:0007669"/>
    <property type="project" value="UniProtKB-UniRule"/>
</dbReference>
<dbReference type="GO" id="GO:0006523">
    <property type="term" value="P:alanine biosynthetic process"/>
    <property type="evidence" value="ECO:0007669"/>
    <property type="project" value="InterPro"/>
</dbReference>
<dbReference type="GO" id="GO:0015940">
    <property type="term" value="P:pantothenate biosynthetic process"/>
    <property type="evidence" value="ECO:0007669"/>
    <property type="project" value="UniProtKB-UniRule"/>
</dbReference>
<dbReference type="CDD" id="cd06919">
    <property type="entry name" value="Asp_decarbox"/>
    <property type="match status" value="1"/>
</dbReference>
<dbReference type="Gene3D" id="2.40.40.20">
    <property type="match status" value="1"/>
</dbReference>
<dbReference type="HAMAP" id="MF_00446">
    <property type="entry name" value="PanD"/>
    <property type="match status" value="1"/>
</dbReference>
<dbReference type="InterPro" id="IPR009010">
    <property type="entry name" value="Asp_de-COase-like_dom_sf"/>
</dbReference>
<dbReference type="InterPro" id="IPR003190">
    <property type="entry name" value="Asp_decarbox"/>
</dbReference>
<dbReference type="NCBIfam" id="TIGR00223">
    <property type="entry name" value="panD"/>
    <property type="match status" value="1"/>
</dbReference>
<dbReference type="PANTHER" id="PTHR21012">
    <property type="entry name" value="ASPARTATE 1-DECARBOXYLASE"/>
    <property type="match status" value="1"/>
</dbReference>
<dbReference type="PANTHER" id="PTHR21012:SF0">
    <property type="entry name" value="ASPARTATE 1-DECARBOXYLASE"/>
    <property type="match status" value="1"/>
</dbReference>
<dbReference type="Pfam" id="PF02261">
    <property type="entry name" value="Asp_decarbox"/>
    <property type="match status" value="1"/>
</dbReference>
<dbReference type="PIRSF" id="PIRSF006246">
    <property type="entry name" value="Asp_decarbox"/>
    <property type="match status" value="1"/>
</dbReference>
<dbReference type="SUPFAM" id="SSF50692">
    <property type="entry name" value="ADC-like"/>
    <property type="match status" value="1"/>
</dbReference>
<reference key="1">
    <citation type="journal article" date="2005" name="Jpn. Agric. Res. Q.">
        <title>Genome sequence of Xanthomonas oryzae pv. oryzae suggests contribution of large numbers of effector genes and insertion sequences to its race diversity.</title>
        <authorList>
            <person name="Ochiai H."/>
            <person name="Inoue Y."/>
            <person name="Takeya M."/>
            <person name="Sasaki A."/>
            <person name="Kaku H."/>
        </authorList>
    </citation>
    <scope>NUCLEOTIDE SEQUENCE [LARGE SCALE GENOMIC DNA]</scope>
    <source>
        <strain>MAFF 311018</strain>
    </source>
</reference>
<proteinExistence type="inferred from homology"/>
<keyword id="KW-0068">Autocatalytic cleavage</keyword>
<keyword id="KW-0963">Cytoplasm</keyword>
<keyword id="KW-0210">Decarboxylase</keyword>
<keyword id="KW-0456">Lyase</keyword>
<keyword id="KW-0566">Pantothenate biosynthesis</keyword>
<keyword id="KW-0670">Pyruvate</keyword>
<keyword id="KW-0704">Schiff base</keyword>
<keyword id="KW-0865">Zymogen</keyword>
<protein>
    <recommendedName>
        <fullName evidence="1">Aspartate 1-decarboxylase</fullName>
        <ecNumber evidence="1">4.1.1.11</ecNumber>
    </recommendedName>
    <alternativeName>
        <fullName evidence="1">Aspartate alpha-decarboxylase</fullName>
    </alternativeName>
    <component>
        <recommendedName>
            <fullName evidence="1">Aspartate 1-decarboxylase beta chain</fullName>
        </recommendedName>
    </component>
    <component>
        <recommendedName>
            <fullName evidence="1">Aspartate 1-decarboxylase alpha chain</fullName>
        </recommendedName>
    </component>
</protein>
<feature type="chain" id="PRO_0000236917" description="Aspartate 1-decarboxylase beta chain" evidence="1">
    <location>
        <begin position="1"/>
        <end position="24"/>
    </location>
</feature>
<feature type="chain" id="PRO_0000236918" description="Aspartate 1-decarboxylase alpha chain" evidence="1">
    <location>
        <begin position="25"/>
        <end position="126"/>
    </location>
</feature>
<feature type="active site" description="Schiff-base intermediate with substrate; via pyruvic acid" evidence="1">
    <location>
        <position position="25"/>
    </location>
</feature>
<feature type="active site" description="Proton donor" evidence="1">
    <location>
        <position position="58"/>
    </location>
</feature>
<feature type="binding site" evidence="1">
    <location>
        <position position="57"/>
    </location>
    <ligand>
        <name>substrate</name>
    </ligand>
</feature>
<feature type="binding site" evidence="1">
    <location>
        <begin position="73"/>
        <end position="75"/>
    </location>
    <ligand>
        <name>substrate</name>
    </ligand>
</feature>
<feature type="modified residue" description="Pyruvic acid (Ser)" evidence="1">
    <location>
        <position position="25"/>
    </location>
</feature>
<gene>
    <name evidence="1" type="primary">panD</name>
    <name type="ordered locus">XOO2243</name>
</gene>
<sequence length="126" mass="13626">MHLSLLKAKIHRATVTHAELNYEGSIAIDGLLLEATGIREFEQVHIWDVTNGARFSTYAIRAEDGSGIMSLNGGAARHVQVGDLIIVAAFASMSEDEAKTFKPNLVYVNARNAISHTNHSIPTQAA</sequence>
<comment type="function">
    <text evidence="1">Catalyzes the pyruvoyl-dependent decarboxylation of aspartate to produce beta-alanine.</text>
</comment>
<comment type="catalytic activity">
    <reaction evidence="1">
        <text>L-aspartate + H(+) = beta-alanine + CO2</text>
        <dbReference type="Rhea" id="RHEA:19497"/>
        <dbReference type="ChEBI" id="CHEBI:15378"/>
        <dbReference type="ChEBI" id="CHEBI:16526"/>
        <dbReference type="ChEBI" id="CHEBI:29991"/>
        <dbReference type="ChEBI" id="CHEBI:57966"/>
        <dbReference type="EC" id="4.1.1.11"/>
    </reaction>
</comment>
<comment type="cofactor">
    <cofactor evidence="1">
        <name>pyruvate</name>
        <dbReference type="ChEBI" id="CHEBI:15361"/>
    </cofactor>
    <text evidence="1">Binds 1 pyruvoyl group covalently per subunit.</text>
</comment>
<comment type="pathway">
    <text evidence="1">Cofactor biosynthesis; (R)-pantothenate biosynthesis; beta-alanine from L-aspartate: step 1/1.</text>
</comment>
<comment type="subunit">
    <text evidence="1">Heterooctamer of four alpha and four beta subunits.</text>
</comment>
<comment type="subcellular location">
    <subcellularLocation>
        <location evidence="1">Cytoplasm</location>
    </subcellularLocation>
</comment>
<comment type="PTM">
    <text evidence="1">Is synthesized initially as an inactive proenzyme, which is activated by self-cleavage at a specific serine bond to produce a beta-subunit with a hydroxyl group at its C-terminus and an alpha-subunit with a pyruvoyl group at its N-terminus.</text>
</comment>
<comment type="similarity">
    <text evidence="1">Belongs to the PanD family.</text>
</comment>
<organism>
    <name type="scientific">Xanthomonas oryzae pv. oryzae (strain MAFF 311018)</name>
    <dbReference type="NCBI Taxonomy" id="342109"/>
    <lineage>
        <taxon>Bacteria</taxon>
        <taxon>Pseudomonadati</taxon>
        <taxon>Pseudomonadota</taxon>
        <taxon>Gammaproteobacteria</taxon>
        <taxon>Lysobacterales</taxon>
        <taxon>Lysobacteraceae</taxon>
        <taxon>Xanthomonas</taxon>
    </lineage>
</organism>
<evidence type="ECO:0000255" key="1">
    <source>
        <dbReference type="HAMAP-Rule" id="MF_00446"/>
    </source>
</evidence>